<evidence type="ECO:0000255" key="1">
    <source>
        <dbReference type="HAMAP-Rule" id="MF_01868"/>
    </source>
</evidence>
<protein>
    <recommendedName>
        <fullName evidence="1">Lipopolysaccharide core heptose(II)-phosphate phosphatase</fullName>
        <ecNumber evidence="1">3.1.3.-</ecNumber>
    </recommendedName>
</protein>
<keyword id="KW-0378">Hydrolase</keyword>
<keyword id="KW-0574">Periplasm</keyword>
<keyword id="KW-0732">Signal</keyword>
<organism>
    <name type="scientific">Salmonella typhi</name>
    <dbReference type="NCBI Taxonomy" id="90370"/>
    <lineage>
        <taxon>Bacteria</taxon>
        <taxon>Pseudomonadati</taxon>
        <taxon>Pseudomonadota</taxon>
        <taxon>Gammaproteobacteria</taxon>
        <taxon>Enterobacterales</taxon>
        <taxon>Enterobacteriaceae</taxon>
        <taxon>Salmonella</taxon>
    </lineage>
</organism>
<sequence>MLAFTLRFIKNKRYFAILAGALVIIAGLASQHAWSGNGLPQINGKALAALAKQHPVVVLFRHAERCDRSDNTCLSDSTGITVNGAQDARALGKAFSADIQNYNLYSSNTVRTIQSATWFSAGRSLTADKKMMDCGSGIYASINTLLKKSQNKNIVIFTHNHCLTYIAKNKRGVKFDPDYLNALVMYAENGKLFLDGEFVPG</sequence>
<accession>Q8Z543</accession>
<accession>Q7CB83</accession>
<dbReference type="EC" id="3.1.3.-" evidence="1"/>
<dbReference type="EMBL" id="AE014613">
    <property type="protein sequence ID" value="AAO68273.1"/>
    <property type="molecule type" value="Genomic_DNA"/>
</dbReference>
<dbReference type="EMBL" id="AL513382">
    <property type="protein sequence ID" value="CAD07529.1"/>
    <property type="molecule type" value="Genomic_DNA"/>
</dbReference>
<dbReference type="RefSeq" id="NP_456839.1">
    <property type="nucleotide sequence ID" value="NC_003198.1"/>
</dbReference>
<dbReference type="SMR" id="Q8Z543"/>
<dbReference type="STRING" id="220341.gene:17586426"/>
<dbReference type="KEGG" id="stt:t0567"/>
<dbReference type="KEGG" id="sty:STY2526"/>
<dbReference type="PATRIC" id="fig|220341.7.peg.2557"/>
<dbReference type="eggNOG" id="COG0406">
    <property type="taxonomic scope" value="Bacteria"/>
</dbReference>
<dbReference type="HOGENOM" id="CLU_106705_1_0_6"/>
<dbReference type="OMA" id="NFTVIVW"/>
<dbReference type="OrthoDB" id="6195868at2"/>
<dbReference type="UniPathway" id="UPA00451"/>
<dbReference type="Proteomes" id="UP000000541">
    <property type="component" value="Chromosome"/>
</dbReference>
<dbReference type="Proteomes" id="UP000002670">
    <property type="component" value="Chromosome"/>
</dbReference>
<dbReference type="GO" id="GO:0042597">
    <property type="term" value="C:periplasmic space"/>
    <property type="evidence" value="ECO:0007669"/>
    <property type="project" value="UniProtKB-SubCell"/>
</dbReference>
<dbReference type="GO" id="GO:0016791">
    <property type="term" value="F:phosphatase activity"/>
    <property type="evidence" value="ECO:0007669"/>
    <property type="project" value="UniProtKB-UniRule"/>
</dbReference>
<dbReference type="GO" id="GO:0008653">
    <property type="term" value="P:lipopolysaccharide metabolic process"/>
    <property type="evidence" value="ECO:0007669"/>
    <property type="project" value="UniProtKB-UniRule"/>
</dbReference>
<dbReference type="CDD" id="cd07040">
    <property type="entry name" value="HP"/>
    <property type="match status" value="1"/>
</dbReference>
<dbReference type="Gene3D" id="3.40.50.1240">
    <property type="entry name" value="Phosphoglycerate mutase-like"/>
    <property type="match status" value="1"/>
</dbReference>
<dbReference type="HAMAP" id="MF_01868">
    <property type="entry name" value="Ais"/>
    <property type="match status" value="1"/>
</dbReference>
<dbReference type="InterPro" id="IPR029033">
    <property type="entry name" value="His_PPase_superfam"/>
</dbReference>
<dbReference type="InterPro" id="IPR011310">
    <property type="entry name" value="LipoPS_heptP_Pase"/>
</dbReference>
<dbReference type="NCBIfam" id="NF011945">
    <property type="entry name" value="PRK15416.1"/>
    <property type="match status" value="1"/>
</dbReference>
<dbReference type="PIRSF" id="PIRSF011416">
    <property type="entry name" value="Ais-TraG-AfrS"/>
    <property type="match status" value="1"/>
</dbReference>
<dbReference type="SUPFAM" id="SSF53254">
    <property type="entry name" value="Phosphoglycerate mutase-like"/>
    <property type="match status" value="1"/>
</dbReference>
<gene>
    <name evidence="1" type="primary">ais</name>
    <name type="ordered locus">STY2526</name>
    <name type="ordered locus">t0567</name>
</gene>
<name>AIS_SALTI</name>
<reference key="1">
    <citation type="journal article" date="2001" name="Nature">
        <title>Complete genome sequence of a multiple drug resistant Salmonella enterica serovar Typhi CT18.</title>
        <authorList>
            <person name="Parkhill J."/>
            <person name="Dougan G."/>
            <person name="James K.D."/>
            <person name="Thomson N.R."/>
            <person name="Pickard D."/>
            <person name="Wain J."/>
            <person name="Churcher C.M."/>
            <person name="Mungall K.L."/>
            <person name="Bentley S.D."/>
            <person name="Holden M.T.G."/>
            <person name="Sebaihia M."/>
            <person name="Baker S."/>
            <person name="Basham D."/>
            <person name="Brooks K."/>
            <person name="Chillingworth T."/>
            <person name="Connerton P."/>
            <person name="Cronin A."/>
            <person name="Davis P."/>
            <person name="Davies R.M."/>
            <person name="Dowd L."/>
            <person name="White N."/>
            <person name="Farrar J."/>
            <person name="Feltwell T."/>
            <person name="Hamlin N."/>
            <person name="Haque A."/>
            <person name="Hien T.T."/>
            <person name="Holroyd S."/>
            <person name="Jagels K."/>
            <person name="Krogh A."/>
            <person name="Larsen T.S."/>
            <person name="Leather S."/>
            <person name="Moule S."/>
            <person name="O'Gaora P."/>
            <person name="Parry C."/>
            <person name="Quail M.A."/>
            <person name="Rutherford K.M."/>
            <person name="Simmonds M."/>
            <person name="Skelton J."/>
            <person name="Stevens K."/>
            <person name="Whitehead S."/>
            <person name="Barrell B.G."/>
        </authorList>
    </citation>
    <scope>NUCLEOTIDE SEQUENCE [LARGE SCALE GENOMIC DNA]</scope>
    <source>
        <strain>CT18</strain>
    </source>
</reference>
<reference key="2">
    <citation type="journal article" date="2003" name="J. Bacteriol.">
        <title>Comparative genomics of Salmonella enterica serovar Typhi strains Ty2 and CT18.</title>
        <authorList>
            <person name="Deng W."/>
            <person name="Liou S.-R."/>
            <person name="Plunkett G. III"/>
            <person name="Mayhew G.F."/>
            <person name="Rose D.J."/>
            <person name="Burland V."/>
            <person name="Kodoyianni V."/>
            <person name="Schwartz D.C."/>
            <person name="Blattner F.R."/>
        </authorList>
    </citation>
    <scope>NUCLEOTIDE SEQUENCE [LARGE SCALE GENOMIC DNA]</scope>
    <source>
        <strain>ATCC 700931 / Ty2</strain>
    </source>
</reference>
<feature type="signal peptide" evidence="1">
    <location>
        <begin position="1"/>
        <end position="33"/>
    </location>
</feature>
<feature type="chain" id="PRO_0000380585" description="Lipopolysaccharide core heptose(II)-phosphate phosphatase">
    <location>
        <begin position="34"/>
        <end position="201"/>
    </location>
</feature>
<comment type="function">
    <text evidence="1">Catalyzes the dephosphorylation of heptose(II) of the outer membrane lipopolysaccharide core.</text>
</comment>
<comment type="pathway">
    <text evidence="1">Bacterial outer membrane biogenesis; lipopolysaccharide metabolism.</text>
</comment>
<comment type="subcellular location">
    <subcellularLocation>
        <location evidence="1">Periplasm</location>
    </subcellularLocation>
</comment>
<comment type="similarity">
    <text evidence="1">Belongs to the phosphoglycerate mutase family. Ais subfamily.</text>
</comment>
<proteinExistence type="inferred from homology"/>